<keyword id="KW-0030">Aminoacyl-tRNA synthetase</keyword>
<keyword id="KW-0067">ATP-binding</keyword>
<keyword id="KW-0963">Cytoplasm</keyword>
<keyword id="KW-0436">Ligase</keyword>
<keyword id="KW-0479">Metal-binding</keyword>
<keyword id="KW-0547">Nucleotide-binding</keyword>
<keyword id="KW-0648">Protein biosynthesis</keyword>
<keyword id="KW-1185">Reference proteome</keyword>
<keyword id="KW-0694">RNA-binding</keyword>
<keyword id="KW-0820">tRNA-binding</keyword>
<keyword id="KW-0862">Zinc</keyword>
<organism>
    <name type="scientific">Bradyrhizobium diazoefficiens (strain JCM 10833 / BCRC 13528 / IAM 13628 / NBRC 14792 / USDA 110)</name>
    <dbReference type="NCBI Taxonomy" id="224911"/>
    <lineage>
        <taxon>Bacteria</taxon>
        <taxon>Pseudomonadati</taxon>
        <taxon>Pseudomonadota</taxon>
        <taxon>Alphaproteobacteria</taxon>
        <taxon>Hyphomicrobiales</taxon>
        <taxon>Nitrobacteraceae</taxon>
        <taxon>Bradyrhizobium</taxon>
    </lineage>
</organism>
<evidence type="ECO:0000255" key="1">
    <source>
        <dbReference type="HAMAP-Rule" id="MF_00036"/>
    </source>
</evidence>
<evidence type="ECO:0000256" key="2">
    <source>
        <dbReference type="SAM" id="MobiDB-lite"/>
    </source>
</evidence>
<evidence type="ECO:0000305" key="3"/>
<gene>
    <name evidence="1" type="primary">alaS</name>
    <name type="ordered locus">bll5750</name>
</gene>
<proteinExistence type="inferred from homology"/>
<accession>Q89I89</accession>
<name>SYA_BRADU</name>
<protein>
    <recommendedName>
        <fullName evidence="1">Alanine--tRNA ligase</fullName>
        <ecNumber evidence="1">6.1.1.7</ecNumber>
    </recommendedName>
    <alternativeName>
        <fullName evidence="1">Alanyl-tRNA synthetase</fullName>
        <shortName evidence="1">AlaRS</shortName>
    </alternativeName>
</protein>
<comment type="function">
    <text evidence="1">Catalyzes the attachment of alanine to tRNA(Ala) in a two-step reaction: alanine is first activated by ATP to form Ala-AMP and then transferred to the acceptor end of tRNA(Ala). Also edits incorrectly charged Ser-tRNA(Ala) and Gly-tRNA(Ala) via its editing domain.</text>
</comment>
<comment type="catalytic activity">
    <reaction evidence="1">
        <text>tRNA(Ala) + L-alanine + ATP = L-alanyl-tRNA(Ala) + AMP + diphosphate</text>
        <dbReference type="Rhea" id="RHEA:12540"/>
        <dbReference type="Rhea" id="RHEA-COMP:9657"/>
        <dbReference type="Rhea" id="RHEA-COMP:9923"/>
        <dbReference type="ChEBI" id="CHEBI:30616"/>
        <dbReference type="ChEBI" id="CHEBI:33019"/>
        <dbReference type="ChEBI" id="CHEBI:57972"/>
        <dbReference type="ChEBI" id="CHEBI:78442"/>
        <dbReference type="ChEBI" id="CHEBI:78497"/>
        <dbReference type="ChEBI" id="CHEBI:456215"/>
        <dbReference type="EC" id="6.1.1.7"/>
    </reaction>
</comment>
<comment type="cofactor">
    <cofactor evidence="1">
        <name>Zn(2+)</name>
        <dbReference type="ChEBI" id="CHEBI:29105"/>
    </cofactor>
    <text evidence="1">Binds 1 zinc ion per subunit.</text>
</comment>
<comment type="subcellular location">
    <subcellularLocation>
        <location evidence="1">Cytoplasm</location>
    </subcellularLocation>
</comment>
<comment type="domain">
    <text evidence="1">Consists of three domains; the N-terminal catalytic domain, the editing domain and the C-terminal C-Ala domain. The editing domain removes incorrectly charged amino acids, while the C-Ala domain, along with tRNA(Ala), serves as a bridge to cooperatively bring together the editing and aminoacylation centers thus stimulating deacylation of misacylated tRNAs.</text>
</comment>
<comment type="similarity">
    <text evidence="1">Belongs to the class-II aminoacyl-tRNA synthetase family.</text>
</comment>
<comment type="sequence caution" evidence="3">
    <conflict type="erroneous initiation">
        <sequence resource="EMBL-CDS" id="BAC51015"/>
    </conflict>
</comment>
<dbReference type="EC" id="6.1.1.7" evidence="1"/>
<dbReference type="EMBL" id="BA000040">
    <property type="protein sequence ID" value="BAC51015.1"/>
    <property type="status" value="ALT_INIT"/>
    <property type="molecule type" value="Genomic_DNA"/>
</dbReference>
<dbReference type="RefSeq" id="NP_772390.1">
    <property type="nucleotide sequence ID" value="NC_004463.1"/>
</dbReference>
<dbReference type="RefSeq" id="WP_038967195.1">
    <property type="nucleotide sequence ID" value="NC_004463.1"/>
</dbReference>
<dbReference type="SMR" id="Q89I89"/>
<dbReference type="FunCoup" id="Q89I89">
    <property type="interactions" value="721"/>
</dbReference>
<dbReference type="STRING" id="224911.AAV28_26260"/>
<dbReference type="EnsemblBacteria" id="BAC51015">
    <property type="protein sequence ID" value="BAC51015"/>
    <property type="gene ID" value="BAC51015"/>
</dbReference>
<dbReference type="GeneID" id="46492751"/>
<dbReference type="KEGG" id="bja:bll5750"/>
<dbReference type="PATRIC" id="fig|224911.44.peg.5683"/>
<dbReference type="eggNOG" id="COG0013">
    <property type="taxonomic scope" value="Bacteria"/>
</dbReference>
<dbReference type="HOGENOM" id="CLU_004485_1_1_5"/>
<dbReference type="InParanoid" id="Q89I89"/>
<dbReference type="OrthoDB" id="9803884at2"/>
<dbReference type="Proteomes" id="UP000002526">
    <property type="component" value="Chromosome"/>
</dbReference>
<dbReference type="GO" id="GO:0005829">
    <property type="term" value="C:cytosol"/>
    <property type="evidence" value="ECO:0000318"/>
    <property type="project" value="GO_Central"/>
</dbReference>
<dbReference type="GO" id="GO:0004813">
    <property type="term" value="F:alanine-tRNA ligase activity"/>
    <property type="evidence" value="ECO:0000318"/>
    <property type="project" value="GO_Central"/>
</dbReference>
<dbReference type="GO" id="GO:0002161">
    <property type="term" value="F:aminoacyl-tRNA deacylase activity"/>
    <property type="evidence" value="ECO:0000318"/>
    <property type="project" value="GO_Central"/>
</dbReference>
<dbReference type="GO" id="GO:0005524">
    <property type="term" value="F:ATP binding"/>
    <property type="evidence" value="ECO:0007669"/>
    <property type="project" value="UniProtKB-UniRule"/>
</dbReference>
<dbReference type="GO" id="GO:0000049">
    <property type="term" value="F:tRNA binding"/>
    <property type="evidence" value="ECO:0007669"/>
    <property type="project" value="UniProtKB-KW"/>
</dbReference>
<dbReference type="GO" id="GO:0008270">
    <property type="term" value="F:zinc ion binding"/>
    <property type="evidence" value="ECO:0007669"/>
    <property type="project" value="UniProtKB-UniRule"/>
</dbReference>
<dbReference type="GO" id="GO:0006419">
    <property type="term" value="P:alanyl-tRNA aminoacylation"/>
    <property type="evidence" value="ECO:0000318"/>
    <property type="project" value="GO_Central"/>
</dbReference>
<dbReference type="GO" id="GO:0045892">
    <property type="term" value="P:negative regulation of DNA-templated transcription"/>
    <property type="evidence" value="ECO:0000318"/>
    <property type="project" value="GO_Central"/>
</dbReference>
<dbReference type="CDD" id="cd00673">
    <property type="entry name" value="AlaRS_core"/>
    <property type="match status" value="1"/>
</dbReference>
<dbReference type="FunFam" id="2.40.30.130:FF:000001">
    <property type="entry name" value="Alanine--tRNA ligase"/>
    <property type="match status" value="1"/>
</dbReference>
<dbReference type="FunFam" id="3.10.310.40:FF:000001">
    <property type="entry name" value="Alanine--tRNA ligase"/>
    <property type="match status" value="1"/>
</dbReference>
<dbReference type="FunFam" id="3.30.54.20:FF:000001">
    <property type="entry name" value="Alanine--tRNA ligase"/>
    <property type="match status" value="1"/>
</dbReference>
<dbReference type="FunFam" id="3.30.930.10:FF:000004">
    <property type="entry name" value="Alanine--tRNA ligase"/>
    <property type="match status" value="1"/>
</dbReference>
<dbReference type="FunFam" id="3.30.980.10:FF:000004">
    <property type="entry name" value="Alanine--tRNA ligase, cytoplasmic"/>
    <property type="match status" value="1"/>
</dbReference>
<dbReference type="Gene3D" id="2.40.30.130">
    <property type="match status" value="1"/>
</dbReference>
<dbReference type="Gene3D" id="3.10.310.40">
    <property type="match status" value="1"/>
</dbReference>
<dbReference type="Gene3D" id="3.30.54.20">
    <property type="match status" value="1"/>
</dbReference>
<dbReference type="Gene3D" id="6.10.250.550">
    <property type="match status" value="1"/>
</dbReference>
<dbReference type="Gene3D" id="3.30.930.10">
    <property type="entry name" value="Bira Bifunctional Protein, Domain 2"/>
    <property type="match status" value="1"/>
</dbReference>
<dbReference type="Gene3D" id="3.30.980.10">
    <property type="entry name" value="Threonyl-trna Synthetase, Chain A, domain 2"/>
    <property type="match status" value="1"/>
</dbReference>
<dbReference type="HAMAP" id="MF_00036_B">
    <property type="entry name" value="Ala_tRNA_synth_B"/>
    <property type="match status" value="1"/>
</dbReference>
<dbReference type="InterPro" id="IPR045864">
    <property type="entry name" value="aa-tRNA-synth_II/BPL/LPL"/>
</dbReference>
<dbReference type="InterPro" id="IPR002318">
    <property type="entry name" value="Ala-tRNA-lgiase_IIc"/>
</dbReference>
<dbReference type="InterPro" id="IPR018162">
    <property type="entry name" value="Ala-tRNA-ligase_IIc_anticod-bd"/>
</dbReference>
<dbReference type="InterPro" id="IPR018165">
    <property type="entry name" value="Ala-tRNA-synth_IIc_core"/>
</dbReference>
<dbReference type="InterPro" id="IPR018164">
    <property type="entry name" value="Ala-tRNA-synth_IIc_N"/>
</dbReference>
<dbReference type="InterPro" id="IPR050058">
    <property type="entry name" value="Ala-tRNA_ligase"/>
</dbReference>
<dbReference type="InterPro" id="IPR023033">
    <property type="entry name" value="Ala_tRNA_ligase_euk/bac"/>
</dbReference>
<dbReference type="InterPro" id="IPR003156">
    <property type="entry name" value="DHHA1_dom"/>
</dbReference>
<dbReference type="InterPro" id="IPR018163">
    <property type="entry name" value="Thr/Ala-tRNA-synth_IIc_edit"/>
</dbReference>
<dbReference type="InterPro" id="IPR009000">
    <property type="entry name" value="Transl_B-barrel_sf"/>
</dbReference>
<dbReference type="InterPro" id="IPR012947">
    <property type="entry name" value="tRNA_SAD"/>
</dbReference>
<dbReference type="NCBIfam" id="TIGR00344">
    <property type="entry name" value="alaS"/>
    <property type="match status" value="1"/>
</dbReference>
<dbReference type="PANTHER" id="PTHR11777:SF9">
    <property type="entry name" value="ALANINE--TRNA LIGASE, CYTOPLASMIC"/>
    <property type="match status" value="1"/>
</dbReference>
<dbReference type="PANTHER" id="PTHR11777">
    <property type="entry name" value="ALANYL-TRNA SYNTHETASE"/>
    <property type="match status" value="1"/>
</dbReference>
<dbReference type="Pfam" id="PF02272">
    <property type="entry name" value="DHHA1"/>
    <property type="match status" value="1"/>
</dbReference>
<dbReference type="Pfam" id="PF01411">
    <property type="entry name" value="tRNA-synt_2c"/>
    <property type="match status" value="1"/>
</dbReference>
<dbReference type="Pfam" id="PF07973">
    <property type="entry name" value="tRNA_SAD"/>
    <property type="match status" value="1"/>
</dbReference>
<dbReference type="PRINTS" id="PR00980">
    <property type="entry name" value="TRNASYNTHALA"/>
</dbReference>
<dbReference type="SMART" id="SM00863">
    <property type="entry name" value="tRNA_SAD"/>
    <property type="match status" value="1"/>
</dbReference>
<dbReference type="SUPFAM" id="SSF55681">
    <property type="entry name" value="Class II aaRS and biotin synthetases"/>
    <property type="match status" value="1"/>
</dbReference>
<dbReference type="SUPFAM" id="SSF101353">
    <property type="entry name" value="Putative anticodon-binding domain of alanyl-tRNA synthetase (AlaRS)"/>
    <property type="match status" value="1"/>
</dbReference>
<dbReference type="SUPFAM" id="SSF55186">
    <property type="entry name" value="ThrRS/AlaRS common domain"/>
    <property type="match status" value="1"/>
</dbReference>
<dbReference type="SUPFAM" id="SSF50447">
    <property type="entry name" value="Translation proteins"/>
    <property type="match status" value="1"/>
</dbReference>
<dbReference type="PROSITE" id="PS50860">
    <property type="entry name" value="AA_TRNA_LIGASE_II_ALA"/>
    <property type="match status" value="1"/>
</dbReference>
<feature type="chain" id="PRO_0000075074" description="Alanine--tRNA ligase">
    <location>
        <begin position="1"/>
        <end position="892"/>
    </location>
</feature>
<feature type="region of interest" description="Disordered" evidence="2">
    <location>
        <begin position="857"/>
        <end position="876"/>
    </location>
</feature>
<feature type="binding site" evidence="1">
    <location>
        <position position="565"/>
    </location>
    <ligand>
        <name>Zn(2+)</name>
        <dbReference type="ChEBI" id="CHEBI:29105"/>
    </ligand>
</feature>
<feature type="binding site" evidence="1">
    <location>
        <position position="569"/>
    </location>
    <ligand>
        <name>Zn(2+)</name>
        <dbReference type="ChEBI" id="CHEBI:29105"/>
    </ligand>
</feature>
<feature type="binding site" evidence="1">
    <location>
        <position position="678"/>
    </location>
    <ligand>
        <name>Zn(2+)</name>
        <dbReference type="ChEBI" id="CHEBI:29105"/>
    </ligand>
</feature>
<feature type="binding site" evidence="1">
    <location>
        <position position="682"/>
    </location>
    <ligand>
        <name>Zn(2+)</name>
        <dbReference type="ChEBI" id="CHEBI:29105"/>
    </ligand>
</feature>
<sequence length="892" mass="96773">MSGVNEIRSTFLNFFAENGHEIVPSSPLVPRNDPTLMFTNAGMVQFKNVFTGVEKRPYQRATTSQKCVRAGGKHNDLDNVGYTARHLTFFEMLGNFSFGDYFKERAIELAWKLITKDFGLNKDKLLVTVYHTDDEAHGLWKKIAGFSDDRIIRIPTSDNFWAMGDTGPCGPCSEIFIDRGDHIWGGPPGSPEEDGDRFLEFWNLVFMQYEQVTKEERVDLPRPSIDTGMGLERMACIMQGVDSVFETDLFRHLIDATASALGSGPNEQTVASFRVIADHLRSSAFLVSDGVLPSNEGRGYVLRRIMRRAMRHAQLLGAKEPLMHRLVWALVREMGQAYPELMRAEKLIEETLRLEETRFRKTLTRGLAILDEKSASLKKGDMFDGDVAFTLYDTYGFPLDLTQDALKSRGIGVDQSAFTDAMERQKAKARESWKGSGEAASEAIWFPLREKLGATEFLGYETESAEGVVSALVKDGQEAASLKAGETGALVLNQTPFYAESGGQVGDTGVLLGEGGVKFRVTDTQKKLGDLFVHVGTVESGELKLGTALQLEVDHSRRSSIRAHHSATHLIHEALRQVLGDHIAQRGSMVAPDRLRFDFVHPKPITAEELARVEDIANDVVLENDEVTTRVMGVDEAREAGARALFGEKYGDEVRVVSMGRTARERGANALGWSVELCGGTHVRRTGDIGLITLTGESAVASGVRRIEALTGNYARKHANDTMALAKTAANELRTSIDDVPARITALMEERKKLERELSDARKKLAMGGGAAASNGAASGVREVGDVKLMARAVEGIEMKDLKSLADDGKKQIGSGVVAIVGVTGDGKAGIVVGVTADLTARFNAVNLVRVASEALGGKGGGGRPDMAQAGGPDGAKAPEALAAIEKAMAGA</sequence>
<reference key="1">
    <citation type="journal article" date="2002" name="DNA Res.">
        <title>Complete genomic sequence of nitrogen-fixing symbiotic bacterium Bradyrhizobium japonicum USDA110.</title>
        <authorList>
            <person name="Kaneko T."/>
            <person name="Nakamura Y."/>
            <person name="Sato S."/>
            <person name="Minamisawa K."/>
            <person name="Uchiumi T."/>
            <person name="Sasamoto S."/>
            <person name="Watanabe A."/>
            <person name="Idesawa K."/>
            <person name="Iriguchi M."/>
            <person name="Kawashima K."/>
            <person name="Kohara M."/>
            <person name="Matsumoto M."/>
            <person name="Shimpo S."/>
            <person name="Tsuruoka H."/>
            <person name="Wada T."/>
            <person name="Yamada M."/>
            <person name="Tabata S."/>
        </authorList>
    </citation>
    <scope>NUCLEOTIDE SEQUENCE [LARGE SCALE GENOMIC DNA]</scope>
    <source>
        <strain>JCM 10833 / BCRC 13528 / IAM 13628 / NBRC 14792 / USDA 110</strain>
    </source>
</reference>